<comment type="similarity">
    <text evidence="1">Belongs to the UPF0246 family.</text>
</comment>
<reference key="1">
    <citation type="submission" date="2008-02" db="EMBL/GenBank/DDBJ databases">
        <title>Complete sequence of Escherichia coli C str. ATCC 8739.</title>
        <authorList>
            <person name="Copeland A."/>
            <person name="Lucas S."/>
            <person name="Lapidus A."/>
            <person name="Glavina del Rio T."/>
            <person name="Dalin E."/>
            <person name="Tice H."/>
            <person name="Bruce D."/>
            <person name="Goodwin L."/>
            <person name="Pitluck S."/>
            <person name="Kiss H."/>
            <person name="Brettin T."/>
            <person name="Detter J.C."/>
            <person name="Han C."/>
            <person name="Kuske C.R."/>
            <person name="Schmutz J."/>
            <person name="Larimer F."/>
            <person name="Land M."/>
            <person name="Hauser L."/>
            <person name="Kyrpides N."/>
            <person name="Mikhailova N."/>
            <person name="Ingram L."/>
            <person name="Richardson P."/>
        </authorList>
    </citation>
    <scope>NUCLEOTIDE SEQUENCE [LARGE SCALE GENOMIC DNA]</scope>
    <source>
        <strain>ATCC 8739 / DSM 1576 / NBRC 3972 / NCIMB 8545 / WDCM 00012 / Crooks</strain>
    </source>
</reference>
<gene>
    <name evidence="1" type="primary">yaaA</name>
    <name type="ordered locus">EcolC_3649</name>
</gene>
<accession>B1IRG7</accession>
<sequence length="258" mass="29600">MLILISPAKTLDYQSPLTTTRYTLPELLDNSQQLIHEARKLTPPQISTLMRISDKLAGINAARFHDWQPDFTPENARQAILAFKGDVYTGLQAETFSEDDFDFAQQHLRMLSGLYGVLRPLDLMQPYRLEMGIRLENARGKDLYQFWGDIITNKLNEALAAQGDNVVINLASDEYFKSVKPKKLNAEIIKPVFLDEKNGKFKIISFYAKKARGLMSRFIIENRLTKPEQLTGFNSEGYFFDEASSSNGELVFKRYEQR</sequence>
<proteinExistence type="inferred from homology"/>
<protein>
    <recommendedName>
        <fullName evidence="1">UPF0246 protein YaaA</fullName>
    </recommendedName>
</protein>
<feature type="chain" id="PRO_1000082766" description="UPF0246 protein YaaA">
    <location>
        <begin position="1"/>
        <end position="258"/>
    </location>
</feature>
<dbReference type="EMBL" id="CP000946">
    <property type="protein sequence ID" value="ACA79260.1"/>
    <property type="molecule type" value="Genomic_DNA"/>
</dbReference>
<dbReference type="RefSeq" id="WP_000906203.1">
    <property type="nucleotide sequence ID" value="NZ_MTFT01000024.1"/>
</dbReference>
<dbReference type="SMR" id="B1IRG7"/>
<dbReference type="GeneID" id="75169905"/>
<dbReference type="KEGG" id="ecl:EcolC_3649"/>
<dbReference type="HOGENOM" id="CLU_061989_0_0_6"/>
<dbReference type="GO" id="GO:0005829">
    <property type="term" value="C:cytosol"/>
    <property type="evidence" value="ECO:0007669"/>
    <property type="project" value="TreeGrafter"/>
</dbReference>
<dbReference type="GO" id="GO:0033194">
    <property type="term" value="P:response to hydroperoxide"/>
    <property type="evidence" value="ECO:0007669"/>
    <property type="project" value="TreeGrafter"/>
</dbReference>
<dbReference type="HAMAP" id="MF_00652">
    <property type="entry name" value="UPF0246"/>
    <property type="match status" value="1"/>
</dbReference>
<dbReference type="InterPro" id="IPR005583">
    <property type="entry name" value="YaaA"/>
</dbReference>
<dbReference type="NCBIfam" id="NF002541">
    <property type="entry name" value="PRK02101.1-1"/>
    <property type="match status" value="1"/>
</dbReference>
<dbReference type="NCBIfam" id="NF002542">
    <property type="entry name" value="PRK02101.1-3"/>
    <property type="match status" value="1"/>
</dbReference>
<dbReference type="PANTHER" id="PTHR30283:SF4">
    <property type="entry name" value="PEROXIDE STRESS RESISTANCE PROTEIN YAAA"/>
    <property type="match status" value="1"/>
</dbReference>
<dbReference type="PANTHER" id="PTHR30283">
    <property type="entry name" value="PEROXIDE STRESS RESPONSE PROTEIN YAAA"/>
    <property type="match status" value="1"/>
</dbReference>
<dbReference type="Pfam" id="PF03883">
    <property type="entry name" value="H2O2_YaaD"/>
    <property type="match status" value="1"/>
</dbReference>
<evidence type="ECO:0000255" key="1">
    <source>
        <dbReference type="HAMAP-Rule" id="MF_00652"/>
    </source>
</evidence>
<organism>
    <name type="scientific">Escherichia coli (strain ATCC 8739 / DSM 1576 / NBRC 3972 / NCIMB 8545 / WDCM 00012 / Crooks)</name>
    <dbReference type="NCBI Taxonomy" id="481805"/>
    <lineage>
        <taxon>Bacteria</taxon>
        <taxon>Pseudomonadati</taxon>
        <taxon>Pseudomonadota</taxon>
        <taxon>Gammaproteobacteria</taxon>
        <taxon>Enterobacterales</taxon>
        <taxon>Enterobacteriaceae</taxon>
        <taxon>Escherichia</taxon>
    </lineage>
</organism>
<name>YAAA_ECOLC</name>